<name>RS17_FRATT</name>
<feature type="chain" id="PRO_0000233478" description="Small ribosomal subunit protein uS17">
    <location>
        <begin position="1"/>
        <end position="83"/>
    </location>
</feature>
<organism>
    <name type="scientific">Francisella tularensis subsp. tularensis (strain SCHU S4 / Schu 4)</name>
    <dbReference type="NCBI Taxonomy" id="177416"/>
    <lineage>
        <taxon>Bacteria</taxon>
        <taxon>Pseudomonadati</taxon>
        <taxon>Pseudomonadota</taxon>
        <taxon>Gammaproteobacteria</taxon>
        <taxon>Thiotrichales</taxon>
        <taxon>Francisellaceae</taxon>
        <taxon>Francisella</taxon>
    </lineage>
</organism>
<comment type="function">
    <text evidence="1">One of the primary rRNA binding proteins, it binds specifically to the 5'-end of 16S ribosomal RNA.</text>
</comment>
<comment type="subunit">
    <text evidence="1">Part of the 30S ribosomal subunit.</text>
</comment>
<comment type="similarity">
    <text evidence="1">Belongs to the universal ribosomal protein uS17 family.</text>
</comment>
<protein>
    <recommendedName>
        <fullName evidence="1">Small ribosomal subunit protein uS17</fullName>
    </recommendedName>
    <alternativeName>
        <fullName evidence="2">30S ribosomal protein S17</fullName>
    </alternativeName>
</protein>
<reference key="1">
    <citation type="journal article" date="2005" name="Nat. Genet.">
        <title>The complete genome sequence of Francisella tularensis, the causative agent of tularemia.</title>
        <authorList>
            <person name="Larsson P."/>
            <person name="Oyston P.C.F."/>
            <person name="Chain P."/>
            <person name="Chu M.C."/>
            <person name="Duffield M."/>
            <person name="Fuxelius H.-H."/>
            <person name="Garcia E."/>
            <person name="Haelltorp G."/>
            <person name="Johansson D."/>
            <person name="Isherwood K.E."/>
            <person name="Karp P.D."/>
            <person name="Larsson E."/>
            <person name="Liu Y."/>
            <person name="Michell S."/>
            <person name="Prior J."/>
            <person name="Prior R."/>
            <person name="Malfatti S."/>
            <person name="Sjoestedt A."/>
            <person name="Svensson K."/>
            <person name="Thompson N."/>
            <person name="Vergez L."/>
            <person name="Wagg J.K."/>
            <person name="Wren B.W."/>
            <person name="Lindler L.E."/>
            <person name="Andersson S.G.E."/>
            <person name="Forsman M."/>
            <person name="Titball R.W."/>
        </authorList>
    </citation>
    <scope>NUCLEOTIDE SEQUENCE [LARGE SCALE GENOMIC DNA]</scope>
    <source>
        <strain>SCHU S4 / Schu 4</strain>
    </source>
</reference>
<gene>
    <name evidence="1" type="primary">rpsQ</name>
    <name type="ordered locus">FTT_0334</name>
</gene>
<proteinExistence type="inferred from homology"/>
<accession>Q5NHV9</accession>
<sequence length="83" mass="9864">MSDKIRLLEGKVSSVAMDKTVVVRAERYVKHPLYGKFVKKTTKYYVHDENNECKEGDVIKFKETRPYSKTKKWCLVDIIHREK</sequence>
<dbReference type="EMBL" id="AJ749949">
    <property type="protein sequence ID" value="CAG44967.1"/>
    <property type="molecule type" value="Genomic_DNA"/>
</dbReference>
<dbReference type="RefSeq" id="WP_003017803.1">
    <property type="nucleotide sequence ID" value="NZ_CP010290.1"/>
</dbReference>
<dbReference type="RefSeq" id="YP_169383.1">
    <property type="nucleotide sequence ID" value="NC_006570.2"/>
</dbReference>
<dbReference type="SMR" id="Q5NHV9"/>
<dbReference type="STRING" id="177416.FTT_0334"/>
<dbReference type="DNASU" id="3191023"/>
<dbReference type="EnsemblBacteria" id="CAG44967">
    <property type="protein sequence ID" value="CAG44967"/>
    <property type="gene ID" value="FTT_0334"/>
</dbReference>
<dbReference type="GeneID" id="75264252"/>
<dbReference type="KEGG" id="ftu:FTT_0334"/>
<dbReference type="eggNOG" id="COG0186">
    <property type="taxonomic scope" value="Bacteria"/>
</dbReference>
<dbReference type="OrthoDB" id="9811714at2"/>
<dbReference type="Proteomes" id="UP000001174">
    <property type="component" value="Chromosome"/>
</dbReference>
<dbReference type="GO" id="GO:0022627">
    <property type="term" value="C:cytosolic small ribosomal subunit"/>
    <property type="evidence" value="ECO:0007669"/>
    <property type="project" value="TreeGrafter"/>
</dbReference>
<dbReference type="GO" id="GO:0019843">
    <property type="term" value="F:rRNA binding"/>
    <property type="evidence" value="ECO:0007669"/>
    <property type="project" value="UniProtKB-UniRule"/>
</dbReference>
<dbReference type="GO" id="GO:0003735">
    <property type="term" value="F:structural constituent of ribosome"/>
    <property type="evidence" value="ECO:0007669"/>
    <property type="project" value="InterPro"/>
</dbReference>
<dbReference type="GO" id="GO:0006412">
    <property type="term" value="P:translation"/>
    <property type="evidence" value="ECO:0007669"/>
    <property type="project" value="UniProtKB-UniRule"/>
</dbReference>
<dbReference type="CDD" id="cd00364">
    <property type="entry name" value="Ribosomal_uS17"/>
    <property type="match status" value="1"/>
</dbReference>
<dbReference type="Gene3D" id="2.40.50.140">
    <property type="entry name" value="Nucleic acid-binding proteins"/>
    <property type="match status" value="1"/>
</dbReference>
<dbReference type="HAMAP" id="MF_01345_B">
    <property type="entry name" value="Ribosomal_uS17_B"/>
    <property type="match status" value="1"/>
</dbReference>
<dbReference type="InterPro" id="IPR012340">
    <property type="entry name" value="NA-bd_OB-fold"/>
</dbReference>
<dbReference type="InterPro" id="IPR000266">
    <property type="entry name" value="Ribosomal_uS17"/>
</dbReference>
<dbReference type="InterPro" id="IPR019984">
    <property type="entry name" value="Ribosomal_uS17_bact/chlr"/>
</dbReference>
<dbReference type="NCBIfam" id="NF004123">
    <property type="entry name" value="PRK05610.1"/>
    <property type="match status" value="1"/>
</dbReference>
<dbReference type="NCBIfam" id="TIGR03635">
    <property type="entry name" value="uS17_bact"/>
    <property type="match status" value="1"/>
</dbReference>
<dbReference type="PANTHER" id="PTHR10744">
    <property type="entry name" value="40S RIBOSOMAL PROTEIN S11 FAMILY MEMBER"/>
    <property type="match status" value="1"/>
</dbReference>
<dbReference type="PANTHER" id="PTHR10744:SF1">
    <property type="entry name" value="SMALL RIBOSOMAL SUBUNIT PROTEIN US17M"/>
    <property type="match status" value="1"/>
</dbReference>
<dbReference type="Pfam" id="PF00366">
    <property type="entry name" value="Ribosomal_S17"/>
    <property type="match status" value="1"/>
</dbReference>
<dbReference type="PRINTS" id="PR00973">
    <property type="entry name" value="RIBOSOMALS17"/>
</dbReference>
<dbReference type="SUPFAM" id="SSF50249">
    <property type="entry name" value="Nucleic acid-binding proteins"/>
    <property type="match status" value="1"/>
</dbReference>
<evidence type="ECO:0000255" key="1">
    <source>
        <dbReference type="HAMAP-Rule" id="MF_01345"/>
    </source>
</evidence>
<evidence type="ECO:0000305" key="2"/>
<keyword id="KW-1185">Reference proteome</keyword>
<keyword id="KW-0687">Ribonucleoprotein</keyword>
<keyword id="KW-0689">Ribosomal protein</keyword>
<keyword id="KW-0694">RNA-binding</keyword>
<keyword id="KW-0699">rRNA-binding</keyword>